<protein>
    <recommendedName>
        <fullName>Uncharacterized protein y4mC</fullName>
    </recommendedName>
</protein>
<feature type="signal peptide" evidence="1">
    <location>
        <begin position="1"/>
        <end position="28"/>
    </location>
</feature>
<feature type="chain" id="PRO_0000014169" description="Uncharacterized protein y4mC">
    <location>
        <begin position="29"/>
        <end position="237"/>
    </location>
</feature>
<dbReference type="EMBL" id="U00090">
    <property type="protein sequence ID" value="AAB91766.1"/>
    <property type="molecule type" value="Genomic_DNA"/>
</dbReference>
<dbReference type="RefSeq" id="NP_443969.1">
    <property type="nucleotide sequence ID" value="NC_000914.2"/>
</dbReference>
<dbReference type="RefSeq" id="WP_010875281.1">
    <property type="nucleotide sequence ID" value="NC_000914.2"/>
</dbReference>
<dbReference type="SMR" id="P55562"/>
<dbReference type="KEGG" id="rhi:NGR_a02560"/>
<dbReference type="eggNOG" id="COG3161">
    <property type="taxonomic scope" value="Bacteria"/>
</dbReference>
<dbReference type="HOGENOM" id="CLU_105835_0_0_5"/>
<dbReference type="OrthoDB" id="7862147at2"/>
<dbReference type="Proteomes" id="UP000001054">
    <property type="component" value="Plasmid pNGR234a"/>
</dbReference>
<dbReference type="Gene3D" id="3.40.1410.10">
    <property type="entry name" value="Chorismate lyase-like"/>
    <property type="match status" value="1"/>
</dbReference>
<dbReference type="InterPro" id="IPR028978">
    <property type="entry name" value="Chorismate_lyase_/UTRA_dom_sf"/>
</dbReference>
<dbReference type="SUPFAM" id="SSF64288">
    <property type="entry name" value="Chorismate lyase-like"/>
    <property type="match status" value="1"/>
</dbReference>
<organism>
    <name type="scientific">Sinorhizobium fredii (strain NBRC 101917 / NGR234)</name>
    <dbReference type="NCBI Taxonomy" id="394"/>
    <lineage>
        <taxon>Bacteria</taxon>
        <taxon>Pseudomonadati</taxon>
        <taxon>Pseudomonadota</taxon>
        <taxon>Alphaproteobacteria</taxon>
        <taxon>Hyphomicrobiales</taxon>
        <taxon>Rhizobiaceae</taxon>
        <taxon>Sinorhizobium/Ensifer group</taxon>
        <taxon>Sinorhizobium</taxon>
    </lineage>
</organism>
<gene>
    <name type="ordered locus">NGR_a02560</name>
    <name type="ORF">y4mC</name>
</gene>
<sequence>MVFSFSTFNRLVTFTVMAAIVSVRPLTAEDLSSQQQWPGTPLSRVEALAVLQTLNANLLSNASATLTLDRWCEAHRLAPPGSKIVAKHVQGHDKPANVHIRKLLHVGPNEPIVYRHVRLACGDRILSEADNWYVPARLTAEMNEVLNTTDISFGRAVRSLNFTRTNLTARLLWSPLPEGWDMSAELPVSSSGPLIPPPFLLEHHAVLKLQDGTPFSAVVESYTNNVLDFPAPLLYPQ</sequence>
<evidence type="ECO:0000255" key="1"/>
<name>Y4MC_SINFN</name>
<keyword id="KW-0614">Plasmid</keyword>
<keyword id="KW-1185">Reference proteome</keyword>
<keyword id="KW-0732">Signal</keyword>
<reference key="1">
    <citation type="journal article" date="1997" name="Nature">
        <title>Molecular basis of symbiosis between Rhizobium and legumes.</title>
        <authorList>
            <person name="Freiberg C.A."/>
            <person name="Fellay R."/>
            <person name="Bairoch A."/>
            <person name="Broughton W.J."/>
            <person name="Rosenthal A."/>
            <person name="Perret X."/>
        </authorList>
    </citation>
    <scope>NUCLEOTIDE SEQUENCE [LARGE SCALE GENOMIC DNA]</scope>
    <source>
        <strain>NBRC 101917 / NGR234</strain>
    </source>
</reference>
<reference key="2">
    <citation type="journal article" date="2009" name="Appl. Environ. Microbiol.">
        <title>Rhizobium sp. strain NGR234 possesses a remarkable number of secretion systems.</title>
        <authorList>
            <person name="Schmeisser C."/>
            <person name="Liesegang H."/>
            <person name="Krysciak D."/>
            <person name="Bakkou N."/>
            <person name="Le Quere A."/>
            <person name="Wollherr A."/>
            <person name="Heinemeyer I."/>
            <person name="Morgenstern B."/>
            <person name="Pommerening-Roeser A."/>
            <person name="Flores M."/>
            <person name="Palacios R."/>
            <person name="Brenner S."/>
            <person name="Gottschalk G."/>
            <person name="Schmitz R.A."/>
            <person name="Broughton W.J."/>
            <person name="Perret X."/>
            <person name="Strittmatter A.W."/>
            <person name="Streit W.R."/>
        </authorList>
    </citation>
    <scope>NUCLEOTIDE SEQUENCE [LARGE SCALE GENOMIC DNA]</scope>
    <source>
        <strain>NBRC 101917 / NGR234</strain>
    </source>
</reference>
<accession>P55562</accession>
<proteinExistence type="inferred from homology"/>
<geneLocation type="plasmid">
    <name>sym pNGR234a</name>
</geneLocation>